<name>ENO_CLOD6</name>
<dbReference type="EC" id="4.2.1.11" evidence="1"/>
<dbReference type="EMBL" id="AM180355">
    <property type="protein sequence ID" value="CAJ70067.1"/>
    <property type="molecule type" value="Genomic_DNA"/>
</dbReference>
<dbReference type="RefSeq" id="WP_009898301.1">
    <property type="nucleotide sequence ID" value="NZ_JAUPES010000021.1"/>
</dbReference>
<dbReference type="RefSeq" id="YP_001089687.1">
    <property type="nucleotide sequence ID" value="NC_009089.1"/>
</dbReference>
<dbReference type="SMR" id="Q181T5"/>
<dbReference type="STRING" id="272563.CD630_31700"/>
<dbReference type="EnsemblBacteria" id="CAJ70067">
    <property type="protein sequence ID" value="CAJ70067"/>
    <property type="gene ID" value="CD630_31700"/>
</dbReference>
<dbReference type="GeneID" id="66355584"/>
<dbReference type="KEGG" id="cdf:CD630_31700"/>
<dbReference type="PATRIC" id="fig|272563.8.peg.3321"/>
<dbReference type="eggNOG" id="COG0148">
    <property type="taxonomic scope" value="Bacteria"/>
</dbReference>
<dbReference type="OrthoDB" id="9804716at2"/>
<dbReference type="PhylomeDB" id="Q181T5"/>
<dbReference type="BioCyc" id="PDIF272563:G12WB-3336-MONOMER"/>
<dbReference type="UniPathway" id="UPA00109">
    <property type="reaction ID" value="UER00187"/>
</dbReference>
<dbReference type="Proteomes" id="UP000001978">
    <property type="component" value="Chromosome"/>
</dbReference>
<dbReference type="GO" id="GO:0009986">
    <property type="term" value="C:cell surface"/>
    <property type="evidence" value="ECO:0007669"/>
    <property type="project" value="UniProtKB-SubCell"/>
</dbReference>
<dbReference type="GO" id="GO:0005576">
    <property type="term" value="C:extracellular region"/>
    <property type="evidence" value="ECO:0007669"/>
    <property type="project" value="UniProtKB-SubCell"/>
</dbReference>
<dbReference type="GO" id="GO:0000015">
    <property type="term" value="C:phosphopyruvate hydratase complex"/>
    <property type="evidence" value="ECO:0007669"/>
    <property type="project" value="InterPro"/>
</dbReference>
<dbReference type="GO" id="GO:0000287">
    <property type="term" value="F:magnesium ion binding"/>
    <property type="evidence" value="ECO:0007669"/>
    <property type="project" value="UniProtKB-UniRule"/>
</dbReference>
<dbReference type="GO" id="GO:0004634">
    <property type="term" value="F:phosphopyruvate hydratase activity"/>
    <property type="evidence" value="ECO:0007669"/>
    <property type="project" value="UniProtKB-UniRule"/>
</dbReference>
<dbReference type="GO" id="GO:0006096">
    <property type="term" value="P:glycolytic process"/>
    <property type="evidence" value="ECO:0007669"/>
    <property type="project" value="UniProtKB-UniRule"/>
</dbReference>
<dbReference type="CDD" id="cd03313">
    <property type="entry name" value="enolase"/>
    <property type="match status" value="1"/>
</dbReference>
<dbReference type="FunFam" id="3.20.20.120:FF:000001">
    <property type="entry name" value="Enolase"/>
    <property type="match status" value="1"/>
</dbReference>
<dbReference type="FunFam" id="3.30.390.10:FF:000001">
    <property type="entry name" value="Enolase"/>
    <property type="match status" value="1"/>
</dbReference>
<dbReference type="Gene3D" id="3.20.20.120">
    <property type="entry name" value="Enolase-like C-terminal domain"/>
    <property type="match status" value="1"/>
</dbReference>
<dbReference type="Gene3D" id="3.30.390.10">
    <property type="entry name" value="Enolase-like, N-terminal domain"/>
    <property type="match status" value="1"/>
</dbReference>
<dbReference type="HAMAP" id="MF_00318">
    <property type="entry name" value="Enolase"/>
    <property type="match status" value="1"/>
</dbReference>
<dbReference type="InterPro" id="IPR000941">
    <property type="entry name" value="Enolase"/>
</dbReference>
<dbReference type="InterPro" id="IPR036849">
    <property type="entry name" value="Enolase-like_C_sf"/>
</dbReference>
<dbReference type="InterPro" id="IPR029017">
    <property type="entry name" value="Enolase-like_N"/>
</dbReference>
<dbReference type="InterPro" id="IPR020810">
    <property type="entry name" value="Enolase_C"/>
</dbReference>
<dbReference type="InterPro" id="IPR020809">
    <property type="entry name" value="Enolase_CS"/>
</dbReference>
<dbReference type="InterPro" id="IPR020811">
    <property type="entry name" value="Enolase_N"/>
</dbReference>
<dbReference type="NCBIfam" id="TIGR01060">
    <property type="entry name" value="eno"/>
    <property type="match status" value="1"/>
</dbReference>
<dbReference type="PANTHER" id="PTHR11902">
    <property type="entry name" value="ENOLASE"/>
    <property type="match status" value="1"/>
</dbReference>
<dbReference type="PANTHER" id="PTHR11902:SF1">
    <property type="entry name" value="ENOLASE"/>
    <property type="match status" value="1"/>
</dbReference>
<dbReference type="Pfam" id="PF00113">
    <property type="entry name" value="Enolase_C"/>
    <property type="match status" value="1"/>
</dbReference>
<dbReference type="Pfam" id="PF03952">
    <property type="entry name" value="Enolase_N"/>
    <property type="match status" value="1"/>
</dbReference>
<dbReference type="PIRSF" id="PIRSF001400">
    <property type="entry name" value="Enolase"/>
    <property type="match status" value="1"/>
</dbReference>
<dbReference type="PRINTS" id="PR00148">
    <property type="entry name" value="ENOLASE"/>
</dbReference>
<dbReference type="SFLD" id="SFLDS00001">
    <property type="entry name" value="Enolase"/>
    <property type="match status" value="1"/>
</dbReference>
<dbReference type="SFLD" id="SFLDF00002">
    <property type="entry name" value="enolase"/>
    <property type="match status" value="1"/>
</dbReference>
<dbReference type="SMART" id="SM01192">
    <property type="entry name" value="Enolase_C"/>
    <property type="match status" value="1"/>
</dbReference>
<dbReference type="SMART" id="SM01193">
    <property type="entry name" value="Enolase_N"/>
    <property type="match status" value="1"/>
</dbReference>
<dbReference type="SUPFAM" id="SSF51604">
    <property type="entry name" value="Enolase C-terminal domain-like"/>
    <property type="match status" value="1"/>
</dbReference>
<dbReference type="SUPFAM" id="SSF54826">
    <property type="entry name" value="Enolase N-terminal domain-like"/>
    <property type="match status" value="1"/>
</dbReference>
<dbReference type="PROSITE" id="PS00164">
    <property type="entry name" value="ENOLASE"/>
    <property type="match status" value="1"/>
</dbReference>
<proteinExistence type="inferred from homology"/>
<evidence type="ECO:0000255" key="1">
    <source>
        <dbReference type="HAMAP-Rule" id="MF_00318"/>
    </source>
</evidence>
<reference key="1">
    <citation type="journal article" date="2006" name="Nat. Genet.">
        <title>The multidrug-resistant human pathogen Clostridium difficile has a highly mobile, mosaic genome.</title>
        <authorList>
            <person name="Sebaihia M."/>
            <person name="Wren B.W."/>
            <person name="Mullany P."/>
            <person name="Fairweather N.F."/>
            <person name="Minton N."/>
            <person name="Stabler R."/>
            <person name="Thomson N.R."/>
            <person name="Roberts A.P."/>
            <person name="Cerdeno-Tarraga A.M."/>
            <person name="Wang H."/>
            <person name="Holden M.T.G."/>
            <person name="Wright A."/>
            <person name="Churcher C."/>
            <person name="Quail M.A."/>
            <person name="Baker S."/>
            <person name="Bason N."/>
            <person name="Brooks K."/>
            <person name="Chillingworth T."/>
            <person name="Cronin A."/>
            <person name="Davis P."/>
            <person name="Dowd L."/>
            <person name="Fraser A."/>
            <person name="Feltwell T."/>
            <person name="Hance Z."/>
            <person name="Holroyd S."/>
            <person name="Jagels K."/>
            <person name="Moule S."/>
            <person name="Mungall K."/>
            <person name="Price C."/>
            <person name="Rabbinowitsch E."/>
            <person name="Sharp S."/>
            <person name="Simmonds M."/>
            <person name="Stevens K."/>
            <person name="Unwin L."/>
            <person name="Whithead S."/>
            <person name="Dupuy B."/>
            <person name="Dougan G."/>
            <person name="Barrell B."/>
            <person name="Parkhill J."/>
        </authorList>
    </citation>
    <scope>NUCLEOTIDE SEQUENCE [LARGE SCALE GENOMIC DNA]</scope>
    <source>
        <strain>630</strain>
    </source>
</reference>
<sequence length="430" mass="46090">MSVIELVYAREVLDSRGNPTVEVEVVLEDGAMGRAIVPSGASTGAFEAVELRDGDKGRYLGKGVETAVANVNEIIAPEIEGMDAFDQPAIDAIMIELDGTPNKGKLGANAILGVSMAVARAAADEIGLPLFQYLGGVNAKQLPVPMMNILNGGEHADNNVDVQEFMILPVGACCFKEGLRMGAEVFHSLKKVLGEKGLACGVGDEGGFAPNLGSNREALELIVEAITKAGYKPGEDVMLGLDVAATEMYNKETKKYVLAGEGKELTAAEMVALYEDWSNNFPIITIEDGLDEEDWDGWKLLTEKLGNKLQLVGDDLFVTNTERLEKGIENGVANSILVKVNQIGTITETLDAIEMAKRAGYTAVISHRSGETEDSTIADLAVAVNAGQIKTGAPSRTDRVAKYNQLLRIEEMVGEQARYCGLKSFYNLKK</sequence>
<comment type="function">
    <text evidence="1">Catalyzes the reversible conversion of 2-phosphoglycerate (2-PG) into phosphoenolpyruvate (PEP). It is essential for the degradation of carbohydrates via glycolysis.</text>
</comment>
<comment type="catalytic activity">
    <reaction evidence="1">
        <text>(2R)-2-phosphoglycerate = phosphoenolpyruvate + H2O</text>
        <dbReference type="Rhea" id="RHEA:10164"/>
        <dbReference type="ChEBI" id="CHEBI:15377"/>
        <dbReference type="ChEBI" id="CHEBI:58289"/>
        <dbReference type="ChEBI" id="CHEBI:58702"/>
        <dbReference type="EC" id="4.2.1.11"/>
    </reaction>
</comment>
<comment type="cofactor">
    <cofactor evidence="1">
        <name>Mg(2+)</name>
        <dbReference type="ChEBI" id="CHEBI:18420"/>
    </cofactor>
    <text evidence="1">Binds a second Mg(2+) ion via substrate during catalysis.</text>
</comment>
<comment type="pathway">
    <text evidence="1">Carbohydrate degradation; glycolysis; pyruvate from D-glyceraldehyde 3-phosphate: step 4/5.</text>
</comment>
<comment type="subcellular location">
    <subcellularLocation>
        <location evidence="1">Cytoplasm</location>
    </subcellularLocation>
    <subcellularLocation>
        <location evidence="1">Secreted</location>
    </subcellularLocation>
    <subcellularLocation>
        <location evidence="1">Cell surface</location>
    </subcellularLocation>
    <text evidence="1">Fractions of enolase are present in both the cytoplasm and on the cell surface.</text>
</comment>
<comment type="similarity">
    <text evidence="1">Belongs to the enolase family.</text>
</comment>
<organism>
    <name type="scientific">Clostridioides difficile (strain 630)</name>
    <name type="common">Peptoclostridium difficile</name>
    <dbReference type="NCBI Taxonomy" id="272563"/>
    <lineage>
        <taxon>Bacteria</taxon>
        <taxon>Bacillati</taxon>
        <taxon>Bacillota</taxon>
        <taxon>Clostridia</taxon>
        <taxon>Peptostreptococcales</taxon>
        <taxon>Peptostreptococcaceae</taxon>
        <taxon>Clostridioides</taxon>
    </lineage>
</organism>
<keyword id="KW-0963">Cytoplasm</keyword>
<keyword id="KW-0324">Glycolysis</keyword>
<keyword id="KW-0456">Lyase</keyword>
<keyword id="KW-0460">Magnesium</keyword>
<keyword id="KW-0479">Metal-binding</keyword>
<keyword id="KW-1185">Reference proteome</keyword>
<keyword id="KW-0964">Secreted</keyword>
<accession>Q181T5</accession>
<gene>
    <name evidence="1" type="primary">eno</name>
    <name type="ordered locus">CD630_31700</name>
</gene>
<feature type="chain" id="PRO_0000267018" description="Enolase">
    <location>
        <begin position="1"/>
        <end position="430"/>
    </location>
</feature>
<feature type="active site" description="Proton donor" evidence="1">
    <location>
        <position position="205"/>
    </location>
</feature>
<feature type="active site" description="Proton acceptor" evidence="1">
    <location>
        <position position="339"/>
    </location>
</feature>
<feature type="binding site" evidence="1">
    <location>
        <position position="163"/>
    </location>
    <ligand>
        <name>(2R)-2-phosphoglycerate</name>
        <dbReference type="ChEBI" id="CHEBI:58289"/>
    </ligand>
</feature>
<feature type="binding site" evidence="1">
    <location>
        <position position="242"/>
    </location>
    <ligand>
        <name>Mg(2+)</name>
        <dbReference type="ChEBI" id="CHEBI:18420"/>
    </ligand>
</feature>
<feature type="binding site" evidence="1">
    <location>
        <position position="287"/>
    </location>
    <ligand>
        <name>Mg(2+)</name>
        <dbReference type="ChEBI" id="CHEBI:18420"/>
    </ligand>
</feature>
<feature type="binding site" evidence="1">
    <location>
        <position position="314"/>
    </location>
    <ligand>
        <name>Mg(2+)</name>
        <dbReference type="ChEBI" id="CHEBI:18420"/>
    </ligand>
</feature>
<feature type="binding site" evidence="1">
    <location>
        <position position="339"/>
    </location>
    <ligand>
        <name>(2R)-2-phosphoglycerate</name>
        <dbReference type="ChEBI" id="CHEBI:58289"/>
    </ligand>
</feature>
<feature type="binding site" evidence="1">
    <location>
        <position position="368"/>
    </location>
    <ligand>
        <name>(2R)-2-phosphoglycerate</name>
        <dbReference type="ChEBI" id="CHEBI:58289"/>
    </ligand>
</feature>
<feature type="binding site" evidence="1">
    <location>
        <position position="369"/>
    </location>
    <ligand>
        <name>(2R)-2-phosphoglycerate</name>
        <dbReference type="ChEBI" id="CHEBI:58289"/>
    </ligand>
</feature>
<feature type="binding site" evidence="1">
    <location>
        <position position="390"/>
    </location>
    <ligand>
        <name>(2R)-2-phosphoglycerate</name>
        <dbReference type="ChEBI" id="CHEBI:58289"/>
    </ligand>
</feature>
<protein>
    <recommendedName>
        <fullName evidence="1">Enolase</fullName>
        <ecNumber evidence="1">4.2.1.11</ecNumber>
    </recommendedName>
    <alternativeName>
        <fullName evidence="1">2-phospho-D-glycerate hydro-lyase</fullName>
    </alternativeName>
    <alternativeName>
        <fullName evidence="1">2-phosphoglycerate dehydratase</fullName>
    </alternativeName>
</protein>